<dbReference type="EMBL" id="CP000243">
    <property type="protein sequence ID" value="ABE08259.1"/>
    <property type="molecule type" value="Genomic_DNA"/>
</dbReference>
<dbReference type="RefSeq" id="WP_000383836.1">
    <property type="nucleotide sequence ID" value="NZ_CP064825.1"/>
</dbReference>
<dbReference type="SMR" id="Q1R8Q5"/>
<dbReference type="KEGG" id="eci:UTI89_C2799"/>
<dbReference type="HOGENOM" id="CLU_198936_0_0_6"/>
<dbReference type="Proteomes" id="UP000001952">
    <property type="component" value="Chromosome"/>
</dbReference>
<dbReference type="GO" id="GO:0005886">
    <property type="term" value="C:plasma membrane"/>
    <property type="evidence" value="ECO:0007669"/>
    <property type="project" value="UniProtKB-SubCell"/>
</dbReference>
<dbReference type="HAMAP" id="MF_01566">
    <property type="entry name" value="UPF0370"/>
    <property type="match status" value="1"/>
</dbReference>
<dbReference type="InterPro" id="IPR020910">
    <property type="entry name" value="UPF0370"/>
</dbReference>
<dbReference type="NCBIfam" id="NF010185">
    <property type="entry name" value="PRK13664.1"/>
    <property type="match status" value="1"/>
</dbReference>
<dbReference type="Pfam" id="PF13980">
    <property type="entry name" value="UPF0370"/>
    <property type="match status" value="1"/>
</dbReference>
<accession>Q1R8Q5</accession>
<protein>
    <recommendedName>
        <fullName evidence="1">UPF0370 protein YpfN</fullName>
    </recommendedName>
</protein>
<reference key="1">
    <citation type="journal article" date="2006" name="Proc. Natl. Acad. Sci. U.S.A.">
        <title>Identification of genes subject to positive selection in uropathogenic strains of Escherichia coli: a comparative genomics approach.</title>
        <authorList>
            <person name="Chen S.L."/>
            <person name="Hung C.-S."/>
            <person name="Xu J."/>
            <person name="Reigstad C.S."/>
            <person name="Magrini V."/>
            <person name="Sabo A."/>
            <person name="Blasiar D."/>
            <person name="Bieri T."/>
            <person name="Meyer R.R."/>
            <person name="Ozersky P."/>
            <person name="Armstrong J.R."/>
            <person name="Fulton R.S."/>
            <person name="Latreille J.P."/>
            <person name="Spieth J."/>
            <person name="Hooton T.M."/>
            <person name="Mardis E.R."/>
            <person name="Hultgren S.J."/>
            <person name="Gordon J.I."/>
        </authorList>
    </citation>
    <scope>NUCLEOTIDE SEQUENCE [LARGE SCALE GENOMIC DNA]</scope>
    <source>
        <strain>UTI89 / UPEC</strain>
    </source>
</reference>
<sequence length="66" mass="8071">MDWLAKYWWILVIVFLVGVLLNVIKDLKRVDHKKFLANKPELPPHRDFNDKWDDDDDWPKKDQPKK</sequence>
<gene>
    <name evidence="1" type="primary">ypfN</name>
    <name type="ordered locus">UTI89_C2799</name>
</gene>
<organism>
    <name type="scientific">Escherichia coli (strain UTI89 / UPEC)</name>
    <dbReference type="NCBI Taxonomy" id="364106"/>
    <lineage>
        <taxon>Bacteria</taxon>
        <taxon>Pseudomonadati</taxon>
        <taxon>Pseudomonadota</taxon>
        <taxon>Gammaproteobacteria</taxon>
        <taxon>Enterobacterales</taxon>
        <taxon>Enterobacteriaceae</taxon>
        <taxon>Escherichia</taxon>
    </lineage>
</organism>
<name>YPFN_ECOUT</name>
<comment type="subcellular location">
    <subcellularLocation>
        <location evidence="1">Cell membrane</location>
        <topology evidence="1">Single-pass membrane protein</topology>
    </subcellularLocation>
</comment>
<comment type="similarity">
    <text evidence="1">Belongs to the UPF0370 family.</text>
</comment>
<keyword id="KW-1003">Cell membrane</keyword>
<keyword id="KW-0472">Membrane</keyword>
<keyword id="KW-0812">Transmembrane</keyword>
<keyword id="KW-1133">Transmembrane helix</keyword>
<proteinExistence type="inferred from homology"/>
<feature type="chain" id="PRO_1000069083" description="UPF0370 protein YpfN">
    <location>
        <begin position="1"/>
        <end position="66"/>
    </location>
</feature>
<feature type="transmembrane region" description="Helical" evidence="1">
    <location>
        <begin position="4"/>
        <end position="24"/>
    </location>
</feature>
<feature type="region of interest" description="Disordered" evidence="2">
    <location>
        <begin position="39"/>
        <end position="66"/>
    </location>
</feature>
<feature type="compositionally biased region" description="Basic and acidic residues" evidence="2">
    <location>
        <begin position="42"/>
        <end position="51"/>
    </location>
</feature>
<evidence type="ECO:0000255" key="1">
    <source>
        <dbReference type="HAMAP-Rule" id="MF_01566"/>
    </source>
</evidence>
<evidence type="ECO:0000256" key="2">
    <source>
        <dbReference type="SAM" id="MobiDB-lite"/>
    </source>
</evidence>